<sequence length="526" mass="57783">MPDQDTKVRFFRVFCWCPVLRMVRIMLMHAVRAWRSADDFPCTEHMAYKIAQVAADPVDVDPEVADMVCNRIIDNAAVSAASMVRRPVTVARHQALAHPVRHGAKVFGVEGSYSADWAAWANGVAARELDFHDTFLAADYSHPADNIPPLVAVAQQLGVCGAELIRGLVTAYEIHIDLTRGICLHEHKIDHVAHLGPAVAAGIGTMLRLDQETIYHAIGQALHLTTSTRQSRKGAISSWKAFAPAHAGKVGIEAVDRAMRGEGSPAPIWEGEDGVIAWLLAGPEHTYRVPLPAPGEPKRAILDSYTKQHSAEYQSQAPIDLACRLRERIGDLDQIASIVLHTSHHTHVVIGTGSGDPQKFDPDASRETLDHSLPYIFAVALQDGCWHHERSYAPERARRSDTVALWHKISTVEDPEWTRRYHCADPAKKAFGARAEVTLHSGEVIVDELAVADAHPLGTRPFERKQYVEKFTELADGVVEPVEQQRFLAVVESLADLESGAVGGLNVLVDPRVLDKAPVIPPGIFR</sequence>
<keyword id="KW-0153">Cholesterol metabolism</keyword>
<keyword id="KW-0443">Lipid metabolism</keyword>
<keyword id="KW-0456">Lyase</keyword>
<keyword id="KW-1185">Reference proteome</keyword>
<keyword id="KW-0753">Steroid metabolism</keyword>
<keyword id="KW-1207">Sterol metabolism</keyword>
<keyword id="KW-0816">Tricarboxylic acid cycle</keyword>
<dbReference type="EC" id="4.2.1.79" evidence="1"/>
<dbReference type="EC" id="4.2.1.3" evidence="2"/>
<dbReference type="EMBL" id="CP003248">
    <property type="protein sequence ID" value="AFN49029.1"/>
    <property type="molecule type" value="Genomic_DNA"/>
</dbReference>
<dbReference type="EMBL" id="AL123456">
    <property type="protein sequence ID" value="CCP43884.1"/>
    <property type="molecule type" value="Genomic_DNA"/>
</dbReference>
<dbReference type="EMBL" id="JLDD01000012">
    <property type="protein sequence ID" value="KBJ36376.1"/>
    <property type="molecule type" value="Genomic_DNA"/>
</dbReference>
<dbReference type="RefSeq" id="NP_215646.1">
    <property type="nucleotide sequence ID" value="NC_000962.3"/>
</dbReference>
<dbReference type="RefSeq" id="WP_003898738.1">
    <property type="nucleotide sequence ID" value="NC_000962.3"/>
</dbReference>
<dbReference type="SMR" id="O06582"/>
<dbReference type="FunCoup" id="O06582">
    <property type="interactions" value="89"/>
</dbReference>
<dbReference type="STRING" id="83332.Rv1130"/>
<dbReference type="PaxDb" id="83332-Rv1130"/>
<dbReference type="DNASU" id="885843"/>
<dbReference type="GeneID" id="885843"/>
<dbReference type="KEGG" id="mtu:Rv1130"/>
<dbReference type="KEGG" id="mtv:RVBD_1130"/>
<dbReference type="PATRIC" id="fig|83332.111.peg.1262"/>
<dbReference type="TubercuList" id="Rv1130"/>
<dbReference type="eggNOG" id="COG2079">
    <property type="taxonomic scope" value="Bacteria"/>
</dbReference>
<dbReference type="InParanoid" id="O06582"/>
<dbReference type="OrthoDB" id="9797528at2"/>
<dbReference type="PhylomeDB" id="O06582"/>
<dbReference type="UniPathway" id="UPA00223">
    <property type="reaction ID" value="UER00717"/>
</dbReference>
<dbReference type="UniPathway" id="UPA00946"/>
<dbReference type="Proteomes" id="UP000001584">
    <property type="component" value="Chromosome"/>
</dbReference>
<dbReference type="GO" id="GO:0005829">
    <property type="term" value="C:cytosol"/>
    <property type="evidence" value="ECO:0007005"/>
    <property type="project" value="MTBBASE"/>
</dbReference>
<dbReference type="GO" id="GO:0009274">
    <property type="term" value="C:peptidoglycan-based cell wall"/>
    <property type="evidence" value="ECO:0007005"/>
    <property type="project" value="MTBBASE"/>
</dbReference>
<dbReference type="GO" id="GO:0047547">
    <property type="term" value="F:2-methylcitrate dehydratase activity"/>
    <property type="evidence" value="ECO:0000250"/>
    <property type="project" value="UniProtKB"/>
</dbReference>
<dbReference type="GO" id="GO:0003994">
    <property type="term" value="F:aconitate hydratase activity"/>
    <property type="evidence" value="ECO:0007669"/>
    <property type="project" value="UniProtKB-EC"/>
</dbReference>
<dbReference type="GO" id="GO:0008203">
    <property type="term" value="P:cholesterol metabolic process"/>
    <property type="evidence" value="ECO:0007669"/>
    <property type="project" value="UniProtKB-KW"/>
</dbReference>
<dbReference type="GO" id="GO:0019629">
    <property type="term" value="P:propionate catabolic process, 2-methylcitrate cycle"/>
    <property type="evidence" value="ECO:0000315"/>
    <property type="project" value="MTBBASE"/>
</dbReference>
<dbReference type="GO" id="GO:0010447">
    <property type="term" value="P:response to acidic pH"/>
    <property type="evidence" value="ECO:0000270"/>
    <property type="project" value="MTBBASE"/>
</dbReference>
<dbReference type="GO" id="GO:0006099">
    <property type="term" value="P:tricarboxylic acid cycle"/>
    <property type="evidence" value="ECO:0007669"/>
    <property type="project" value="UniProtKB-UniPathway"/>
</dbReference>
<dbReference type="FunFam" id="1.10.4100.10:FF:000003">
    <property type="entry name" value="2-methylcitrate dehydratase 1"/>
    <property type="match status" value="1"/>
</dbReference>
<dbReference type="FunFam" id="3.30.1330.120:FF:000004">
    <property type="entry name" value="2-methylcitrate dehydratase 2"/>
    <property type="match status" value="1"/>
</dbReference>
<dbReference type="Gene3D" id="1.10.4100.10">
    <property type="entry name" value="2-methylcitrate dehydratase PrpD"/>
    <property type="match status" value="1"/>
</dbReference>
<dbReference type="Gene3D" id="3.30.1330.120">
    <property type="entry name" value="2-methylcitrate dehydratase PrpD"/>
    <property type="match status" value="1"/>
</dbReference>
<dbReference type="InterPro" id="IPR053420">
    <property type="entry name" value="2-Methylcitrate_Dehydratase"/>
</dbReference>
<dbReference type="InterPro" id="IPR036148">
    <property type="entry name" value="MmgE/PrpD_sf"/>
</dbReference>
<dbReference type="InterPro" id="IPR042183">
    <property type="entry name" value="MmgE/PrpD_sf_1"/>
</dbReference>
<dbReference type="InterPro" id="IPR042188">
    <property type="entry name" value="MmgE/PrpD_sf_2"/>
</dbReference>
<dbReference type="InterPro" id="IPR005656">
    <property type="entry name" value="MmgE_PrpD"/>
</dbReference>
<dbReference type="InterPro" id="IPR045337">
    <property type="entry name" value="MmgE_PrpD_C"/>
</dbReference>
<dbReference type="InterPro" id="IPR045336">
    <property type="entry name" value="MmgE_PrpD_N"/>
</dbReference>
<dbReference type="NCBIfam" id="NF042438">
    <property type="entry name" value="PrpD_hiGCgrampos"/>
    <property type="match status" value="1"/>
</dbReference>
<dbReference type="PANTHER" id="PTHR16943:SF8">
    <property type="entry name" value="2-METHYLCITRATE DEHYDRATASE"/>
    <property type="match status" value="1"/>
</dbReference>
<dbReference type="PANTHER" id="PTHR16943">
    <property type="entry name" value="2-METHYLCITRATE DEHYDRATASE-RELATED"/>
    <property type="match status" value="1"/>
</dbReference>
<dbReference type="Pfam" id="PF19305">
    <property type="entry name" value="MmgE_PrpD_C"/>
    <property type="match status" value="1"/>
</dbReference>
<dbReference type="Pfam" id="PF03972">
    <property type="entry name" value="MmgE_PrpD_N"/>
    <property type="match status" value="1"/>
</dbReference>
<dbReference type="SUPFAM" id="SSF103378">
    <property type="entry name" value="2-methylcitrate dehydratase PrpD"/>
    <property type="match status" value="1"/>
</dbReference>
<comment type="function">
    <text evidence="2 3 4">Involved in the catabolism of short chain fatty acids (SCFA) via the tricarboxylic acid (TCA)(acetyl degradation route) and via the 2-methylcitrate cycle I (propionate degradation route). Catalyzes the dehydration of 2-methylcitrate (2-MC) to yield the cis isomer of 2-methyl-aconitate (PubMed:18375549, PubMed:22365605). Could also catalyze the dehydration of citrate and the hydration of cis-aconitate (By similarity).</text>
</comment>
<comment type="catalytic activity">
    <reaction evidence="1">
        <text>(2S,3S)-2-methylcitrate = 2-methyl-cis-aconitate + H2O</text>
        <dbReference type="Rhea" id="RHEA:17725"/>
        <dbReference type="ChEBI" id="CHEBI:15377"/>
        <dbReference type="ChEBI" id="CHEBI:57872"/>
        <dbReference type="ChEBI" id="CHEBI:58853"/>
        <dbReference type="EC" id="4.2.1.79"/>
    </reaction>
</comment>
<comment type="catalytic activity">
    <reaction evidence="2">
        <text>citrate = D-threo-isocitrate</text>
        <dbReference type="Rhea" id="RHEA:10336"/>
        <dbReference type="ChEBI" id="CHEBI:15562"/>
        <dbReference type="ChEBI" id="CHEBI:16947"/>
        <dbReference type="EC" id="4.2.1.3"/>
    </reaction>
</comment>
<comment type="pathway">
    <text evidence="8">Organic acid metabolism; propanoate degradation.</text>
</comment>
<comment type="pathway">
    <text evidence="7">Carbohydrate metabolism; tricarboxylic acid cycle; isocitrate from oxaloacetate: step 1/2.</text>
</comment>
<comment type="subunit">
    <text evidence="2">Monomer.</text>
</comment>
<comment type="induction">
    <text evidence="5">Activated by PrpR.</text>
</comment>
<comment type="disruption phenotype">
    <text evidence="3 4">Cells lacking both prpC and prpD genes are unable to grow on propionate or cholesterol as the sole carbon source.</text>
</comment>
<comment type="miscellaneous">
    <text evidence="3">The vitamin B12 restores growth of the prpDC mutant on propionate as the sole carbon source. It suggests the capacity of the MCM-dependent methylmalonyl pathway to support the metabolism of propionate independently of the methylcitrate cycle.</text>
</comment>
<comment type="similarity">
    <text evidence="7">Belongs to the PrpD family.</text>
</comment>
<feature type="chain" id="PRO_0000432935" description="2-methylcitrate dehydratase">
    <location>
        <begin position="1"/>
        <end position="526"/>
    </location>
</feature>
<accession>O06582</accession>
<accession>F2GGE2</accession>
<accession>I6XAP9</accession>
<accession>Q7D8S9</accession>
<proteinExistence type="evidence at protein level"/>
<protein>
    <recommendedName>
        <fullName evidence="6">2-methylcitrate dehydratase</fullName>
        <shortName evidence="6">2-MC dehydratase</shortName>
        <ecNumber evidence="1">4.2.1.79</ecNumber>
    </recommendedName>
    <alternativeName>
        <fullName evidence="2">Aconitate hydratase</fullName>
        <shortName evidence="2">ACN</shortName>
        <shortName evidence="2">Aconitase</shortName>
        <ecNumber evidence="2">4.2.1.3</ecNumber>
    </alternativeName>
</protein>
<reference key="1">
    <citation type="journal article" date="1998" name="Nature">
        <title>Deciphering the biology of Mycobacterium tuberculosis from the complete genome sequence.</title>
        <authorList>
            <person name="Cole S.T."/>
            <person name="Brosch R."/>
            <person name="Parkhill J."/>
            <person name="Garnier T."/>
            <person name="Churcher C.M."/>
            <person name="Harris D.E."/>
            <person name="Gordon S.V."/>
            <person name="Eiglmeier K."/>
            <person name="Gas S."/>
            <person name="Barry C.E. III"/>
            <person name="Tekaia F."/>
            <person name="Badcock K."/>
            <person name="Basham D."/>
            <person name="Brown D."/>
            <person name="Chillingworth T."/>
            <person name="Connor R."/>
            <person name="Davies R.M."/>
            <person name="Devlin K."/>
            <person name="Feltwell T."/>
            <person name="Gentles S."/>
            <person name="Hamlin N."/>
            <person name="Holroyd S."/>
            <person name="Hornsby T."/>
            <person name="Jagels K."/>
            <person name="Krogh A."/>
            <person name="McLean J."/>
            <person name="Moule S."/>
            <person name="Murphy L.D."/>
            <person name="Oliver S."/>
            <person name="Osborne J."/>
            <person name="Quail M.A."/>
            <person name="Rajandream M.A."/>
            <person name="Rogers J."/>
            <person name="Rutter S."/>
            <person name="Seeger K."/>
            <person name="Skelton S."/>
            <person name="Squares S."/>
            <person name="Squares R."/>
            <person name="Sulston J.E."/>
            <person name="Taylor K."/>
            <person name="Whitehead S."/>
            <person name="Barrell B.G."/>
        </authorList>
    </citation>
    <scope>NUCLEOTIDE SEQUENCE [LARGE SCALE GENOMIC DNA]</scope>
    <source>
        <strain>ATCC 25618 / H37Rv</strain>
    </source>
</reference>
<reference key="2">
    <citation type="submission" date="2013-11" db="EMBL/GenBank/DDBJ databases">
        <title>The genome sequence of Mycobacterium tuberculosis H37Rv.</title>
        <authorList>
            <consortium name="The Broad Institute Genome Sequencing Platform"/>
            <person name="Galagan J."/>
            <person name="Kreiswirth B."/>
            <person name="Dobos K."/>
            <person name="Fortune S."/>
            <person name="Fitzgerald M."/>
            <person name="Young S.K."/>
            <person name="Zeng Q."/>
            <person name="Gargeya S."/>
            <person name="Abouelleil A."/>
            <person name="Alvarado L."/>
            <person name="Berlin A.M."/>
            <person name="Chapman S.B."/>
            <person name="Gainer-Dewar J."/>
            <person name="Goldberg J."/>
            <person name="Gnerre S."/>
            <person name="Griggs A."/>
            <person name="Gujja S."/>
            <person name="Hansen M."/>
            <person name="Howarth C."/>
            <person name="Imamovic A."/>
            <person name="Larimer J."/>
            <person name="McCowan C."/>
            <person name="Murphy C."/>
            <person name="Pearson M."/>
            <person name="Poon T."/>
            <person name="Priest M."/>
            <person name="Roberts A."/>
            <person name="Saif S."/>
            <person name="Shea T."/>
            <person name="Sykes S."/>
            <person name="Wortman J."/>
            <person name="Nusbaum C."/>
            <person name="Birren B."/>
        </authorList>
    </citation>
    <scope>NUCLEOTIDE SEQUENCE [LARGE SCALE GENOMIC DNA]</scope>
    <source>
        <strain>ATCC 25618 / H37Rv</strain>
    </source>
</reference>
<reference key="3">
    <citation type="submission" date="2014-04" db="EMBL/GenBank/DDBJ databases">
        <title>The genome sequence of Mycobacterium tuberculosis H37Rv.</title>
        <authorList>
            <consortium name="The Broad Institute Genomics Platform"/>
            <consortium name="The Broad Institute Genome Sequencing Center for Infectious Disease"/>
            <person name="Earl A.M."/>
            <person name="Kreiswirth B."/>
            <person name="Gomez J."/>
            <person name="Victor T."/>
            <person name="Desjardins C."/>
            <person name="Abeel T."/>
            <person name="Young S."/>
            <person name="Zeng Q."/>
            <person name="Gargeya S."/>
            <person name="Abouelleil A."/>
            <person name="Alvarado L."/>
            <person name="Chapman S.B."/>
            <person name="Gainer-Dewar J."/>
            <person name="Goldberg J."/>
            <person name="Griggs A."/>
            <person name="Gujja S."/>
            <person name="Hansen M."/>
            <person name="Howarth C."/>
            <person name="Imamovic A."/>
            <person name="Larimer J."/>
            <person name="Murphy C."/>
            <person name="Naylor J."/>
            <person name="Pearson M."/>
            <person name="Poon T.W."/>
            <person name="Priest M."/>
            <person name="Roberts A."/>
            <person name="Saif S."/>
            <person name="Shea T."/>
            <person name="Sykes S."/>
            <person name="Wortman J."/>
            <person name="Nusbaum C."/>
            <person name="Birren B."/>
        </authorList>
    </citation>
    <scope>NUCLEOTIDE SEQUENCE [LARGE SCALE GENOMIC DNA]</scope>
    <source>
        <strain>ATCC 25618 / H37Rv</strain>
    </source>
</reference>
<reference key="4">
    <citation type="journal article" date="2008" name="J. Bacteriol.">
        <title>Functional characterization of a vitamin B12-dependent methylmalonyl pathway in Mycobacterium tuberculosis: implications for propionate metabolism during growth on fatty acids.</title>
        <authorList>
            <person name="Savvi S."/>
            <person name="Warner D.F."/>
            <person name="Kana B.D."/>
            <person name="McKinney J.D."/>
            <person name="Mizrahi V."/>
            <person name="Dawes S.S."/>
        </authorList>
    </citation>
    <scope>FUNCTION</scope>
    <scope>DISRUPTION PHENOTYPE</scope>
    <scope>PATHWAY</scope>
    <source>
        <strain>ATCC 25618 / H37Rv</strain>
    </source>
</reference>
<reference key="5">
    <citation type="journal article" date="2011" name="Mol. Cell. Proteomics">
        <title>Proteogenomic analysis of Mycobacterium tuberculosis by high resolution mass spectrometry.</title>
        <authorList>
            <person name="Kelkar D.S."/>
            <person name="Kumar D."/>
            <person name="Kumar P."/>
            <person name="Balakrishnan L."/>
            <person name="Muthusamy B."/>
            <person name="Yadav A.K."/>
            <person name="Shrivastava P."/>
            <person name="Marimuthu A."/>
            <person name="Anand S."/>
            <person name="Sundaram H."/>
            <person name="Kingsbury R."/>
            <person name="Harsha H.C."/>
            <person name="Nair B."/>
            <person name="Prasad T.S."/>
            <person name="Chauhan D.S."/>
            <person name="Katoch K."/>
            <person name="Katoch V.M."/>
            <person name="Kumar P."/>
            <person name="Chaerkady R."/>
            <person name="Ramachandran S."/>
            <person name="Dash D."/>
            <person name="Pandey A."/>
        </authorList>
    </citation>
    <scope>IDENTIFICATION BY MASS SPECTROMETRY [LARGE SCALE ANALYSIS]</scope>
    <source>
        <strain>ATCC 25618 / H37Rv</strain>
    </source>
</reference>
<reference key="6">
    <citation type="journal article" date="2012" name="Chem. Biol.">
        <title>Cholesterol catabolism by Mycobacterium tuberculosis requires transcriptional and metabolic adaptations.</title>
        <authorList>
            <person name="Griffin J.E."/>
            <person name="Pandey A.K."/>
            <person name="Gilmore S.A."/>
            <person name="Mizrahi V."/>
            <person name="McKinney J.D."/>
            <person name="Bertozzi C.R."/>
            <person name="Sassetti C.M."/>
        </authorList>
    </citation>
    <scope>FUNCTION</scope>
    <scope>DISRUPTION PHENOTYPE</scope>
    <source>
        <strain>H37Rv</strain>
    </source>
</reference>
<reference key="7">
    <citation type="journal article" date="2012" name="PLoS ONE">
        <title>A novel role of the PrpR as a transcription factor involved in the regulation of methylcitrate pathway in Mycobacterium tuberculosis.</title>
        <authorList>
            <person name="Masiewicz P."/>
            <person name="Brzostek A."/>
            <person name="Wolanski M."/>
            <person name="Dziadek J."/>
            <person name="Zakrzewska-Czerwinska J."/>
        </authorList>
    </citation>
    <scope>INDUCTION</scope>
    <source>
        <strain>H37Rv</strain>
    </source>
</reference>
<evidence type="ECO:0000250" key="1">
    <source>
        <dbReference type="UniProtKB" id="H8F0D6"/>
    </source>
</evidence>
<evidence type="ECO:0000250" key="2">
    <source>
        <dbReference type="UniProtKB" id="P77243"/>
    </source>
</evidence>
<evidence type="ECO:0000269" key="3">
    <source>
    </source>
</evidence>
<evidence type="ECO:0000269" key="4">
    <source>
    </source>
</evidence>
<evidence type="ECO:0000269" key="5">
    <source>
    </source>
</evidence>
<evidence type="ECO:0000303" key="6">
    <source>
    </source>
</evidence>
<evidence type="ECO:0000305" key="7"/>
<evidence type="ECO:0000305" key="8">
    <source>
    </source>
</evidence>
<gene>
    <name type="primary">prpD</name>
    <name type="ordered locus">Rv1130</name>
    <name type="ordered locus">RVBD_1130</name>
    <name type="ORF">P425_01179</name>
</gene>
<name>PRPD_MYCTU</name>
<organism>
    <name type="scientific">Mycobacterium tuberculosis (strain ATCC 25618 / H37Rv)</name>
    <dbReference type="NCBI Taxonomy" id="83332"/>
    <lineage>
        <taxon>Bacteria</taxon>
        <taxon>Bacillati</taxon>
        <taxon>Actinomycetota</taxon>
        <taxon>Actinomycetes</taxon>
        <taxon>Mycobacteriales</taxon>
        <taxon>Mycobacteriaceae</taxon>
        <taxon>Mycobacterium</taxon>
        <taxon>Mycobacterium tuberculosis complex</taxon>
    </lineage>
</organism>